<reference key="1">
    <citation type="submission" date="2007-10" db="EMBL/GenBank/DDBJ databases">
        <title>Complete genome of Alkaliphilus oremlandii OhILAs.</title>
        <authorList>
            <person name="Copeland A."/>
            <person name="Lucas S."/>
            <person name="Lapidus A."/>
            <person name="Barry K."/>
            <person name="Detter J.C."/>
            <person name="Glavina del Rio T."/>
            <person name="Hammon N."/>
            <person name="Israni S."/>
            <person name="Dalin E."/>
            <person name="Tice H."/>
            <person name="Pitluck S."/>
            <person name="Chain P."/>
            <person name="Malfatti S."/>
            <person name="Shin M."/>
            <person name="Vergez L."/>
            <person name="Schmutz J."/>
            <person name="Larimer F."/>
            <person name="Land M."/>
            <person name="Hauser L."/>
            <person name="Kyrpides N."/>
            <person name="Mikhailova N."/>
            <person name="Stolz J.F."/>
            <person name="Dawson A."/>
            <person name="Fisher E."/>
            <person name="Crable B."/>
            <person name="Perera E."/>
            <person name="Lisak J."/>
            <person name="Ranganathan M."/>
            <person name="Basu P."/>
            <person name="Richardson P."/>
        </authorList>
    </citation>
    <scope>NUCLEOTIDE SEQUENCE [LARGE SCALE GENOMIC DNA]</scope>
    <source>
        <strain>OhILAs</strain>
    </source>
</reference>
<feature type="chain" id="PRO_1000080335" description="Large ribosomal subunit protein bL19">
    <location>
        <begin position="1"/>
        <end position="115"/>
    </location>
</feature>
<gene>
    <name evidence="1" type="primary">rplS</name>
    <name type="ordered locus">Clos_1468</name>
</gene>
<name>RL19_ALKOO</name>
<dbReference type="EMBL" id="CP000853">
    <property type="protein sequence ID" value="ABW19012.1"/>
    <property type="molecule type" value="Genomic_DNA"/>
</dbReference>
<dbReference type="RefSeq" id="WP_012159324.1">
    <property type="nucleotide sequence ID" value="NC_009922.1"/>
</dbReference>
<dbReference type="SMR" id="A8MHC5"/>
<dbReference type="STRING" id="350688.Clos_1468"/>
<dbReference type="KEGG" id="aoe:Clos_1468"/>
<dbReference type="eggNOG" id="COG0335">
    <property type="taxonomic scope" value="Bacteria"/>
</dbReference>
<dbReference type="HOGENOM" id="CLU_103507_2_1_9"/>
<dbReference type="OrthoDB" id="9803541at2"/>
<dbReference type="Proteomes" id="UP000000269">
    <property type="component" value="Chromosome"/>
</dbReference>
<dbReference type="GO" id="GO:0022625">
    <property type="term" value="C:cytosolic large ribosomal subunit"/>
    <property type="evidence" value="ECO:0007669"/>
    <property type="project" value="TreeGrafter"/>
</dbReference>
<dbReference type="GO" id="GO:0003735">
    <property type="term" value="F:structural constituent of ribosome"/>
    <property type="evidence" value="ECO:0007669"/>
    <property type="project" value="InterPro"/>
</dbReference>
<dbReference type="GO" id="GO:0006412">
    <property type="term" value="P:translation"/>
    <property type="evidence" value="ECO:0007669"/>
    <property type="project" value="UniProtKB-UniRule"/>
</dbReference>
<dbReference type="FunFam" id="2.30.30.790:FF:000001">
    <property type="entry name" value="50S ribosomal protein L19"/>
    <property type="match status" value="1"/>
</dbReference>
<dbReference type="Gene3D" id="2.30.30.790">
    <property type="match status" value="1"/>
</dbReference>
<dbReference type="HAMAP" id="MF_00402">
    <property type="entry name" value="Ribosomal_bL19"/>
    <property type="match status" value="1"/>
</dbReference>
<dbReference type="InterPro" id="IPR001857">
    <property type="entry name" value="Ribosomal_bL19"/>
</dbReference>
<dbReference type="InterPro" id="IPR018257">
    <property type="entry name" value="Ribosomal_bL19_CS"/>
</dbReference>
<dbReference type="InterPro" id="IPR038657">
    <property type="entry name" value="Ribosomal_bL19_sf"/>
</dbReference>
<dbReference type="InterPro" id="IPR008991">
    <property type="entry name" value="Translation_prot_SH3-like_sf"/>
</dbReference>
<dbReference type="NCBIfam" id="TIGR01024">
    <property type="entry name" value="rplS_bact"/>
    <property type="match status" value="1"/>
</dbReference>
<dbReference type="PANTHER" id="PTHR15680:SF9">
    <property type="entry name" value="LARGE RIBOSOMAL SUBUNIT PROTEIN BL19M"/>
    <property type="match status" value="1"/>
</dbReference>
<dbReference type="PANTHER" id="PTHR15680">
    <property type="entry name" value="RIBOSOMAL PROTEIN L19"/>
    <property type="match status" value="1"/>
</dbReference>
<dbReference type="Pfam" id="PF01245">
    <property type="entry name" value="Ribosomal_L19"/>
    <property type="match status" value="1"/>
</dbReference>
<dbReference type="PIRSF" id="PIRSF002191">
    <property type="entry name" value="Ribosomal_L19"/>
    <property type="match status" value="1"/>
</dbReference>
<dbReference type="PRINTS" id="PR00061">
    <property type="entry name" value="RIBOSOMALL19"/>
</dbReference>
<dbReference type="SUPFAM" id="SSF50104">
    <property type="entry name" value="Translation proteins SH3-like domain"/>
    <property type="match status" value="1"/>
</dbReference>
<dbReference type="PROSITE" id="PS01015">
    <property type="entry name" value="RIBOSOMAL_L19"/>
    <property type="match status" value="1"/>
</dbReference>
<proteinExistence type="inferred from homology"/>
<accession>A8MHC5</accession>
<sequence>MDILRTLASEQLKKDVPEFSNGDTVKVHVKIKEGSRERIQIFEGIVIKRQGGGIAETFTVRRIASGVGVERTFPVHSPRVEKVEVTRRGQVRRAKLYYLRDRVGKAAFKIKEKRR</sequence>
<protein>
    <recommendedName>
        <fullName evidence="1">Large ribosomal subunit protein bL19</fullName>
    </recommendedName>
    <alternativeName>
        <fullName evidence="2">50S ribosomal protein L19</fullName>
    </alternativeName>
</protein>
<comment type="function">
    <text evidence="1">This protein is located at the 30S-50S ribosomal subunit interface and may play a role in the structure and function of the aminoacyl-tRNA binding site.</text>
</comment>
<comment type="similarity">
    <text evidence="1">Belongs to the bacterial ribosomal protein bL19 family.</text>
</comment>
<organism>
    <name type="scientific">Alkaliphilus oremlandii (strain OhILAs)</name>
    <name type="common">Clostridium oremlandii (strain OhILAs)</name>
    <dbReference type="NCBI Taxonomy" id="350688"/>
    <lineage>
        <taxon>Bacteria</taxon>
        <taxon>Bacillati</taxon>
        <taxon>Bacillota</taxon>
        <taxon>Clostridia</taxon>
        <taxon>Peptostreptococcales</taxon>
        <taxon>Natronincolaceae</taxon>
        <taxon>Alkaliphilus</taxon>
    </lineage>
</organism>
<evidence type="ECO:0000255" key="1">
    <source>
        <dbReference type="HAMAP-Rule" id="MF_00402"/>
    </source>
</evidence>
<evidence type="ECO:0000305" key="2"/>
<keyword id="KW-1185">Reference proteome</keyword>
<keyword id="KW-0687">Ribonucleoprotein</keyword>
<keyword id="KW-0689">Ribosomal protein</keyword>